<evidence type="ECO:0000255" key="1">
    <source>
        <dbReference type="HAMAP-Rule" id="MF_01444"/>
    </source>
</evidence>
<organism>
    <name type="scientific">Bacillus cereus (strain G9842)</name>
    <dbReference type="NCBI Taxonomy" id="405531"/>
    <lineage>
        <taxon>Bacteria</taxon>
        <taxon>Bacillati</taxon>
        <taxon>Bacillota</taxon>
        <taxon>Bacilli</taxon>
        <taxon>Bacillales</taxon>
        <taxon>Bacillaceae</taxon>
        <taxon>Bacillus</taxon>
        <taxon>Bacillus cereus group</taxon>
    </lineage>
</organism>
<dbReference type="EC" id="3.1.-.-" evidence="1"/>
<dbReference type="EMBL" id="CP001186">
    <property type="protein sequence ID" value="ACK94569.1"/>
    <property type="molecule type" value="Genomic_DNA"/>
</dbReference>
<dbReference type="RefSeq" id="WP_000765871.1">
    <property type="nucleotide sequence ID" value="NC_011772.1"/>
</dbReference>
<dbReference type="SMR" id="B7IM63"/>
<dbReference type="KEGG" id="bcg:BCG9842_B4061"/>
<dbReference type="HOGENOM" id="CLU_132020_0_0_9"/>
<dbReference type="Proteomes" id="UP000006744">
    <property type="component" value="Chromosome"/>
</dbReference>
<dbReference type="GO" id="GO:0016788">
    <property type="term" value="F:hydrolase activity, acting on ester bonds"/>
    <property type="evidence" value="ECO:0007669"/>
    <property type="project" value="UniProtKB-UniRule"/>
</dbReference>
<dbReference type="Gene3D" id="3.90.1140.10">
    <property type="entry name" value="Cyclic phosphodiesterase"/>
    <property type="match status" value="1"/>
</dbReference>
<dbReference type="HAMAP" id="MF_01444">
    <property type="entry name" value="2H_phosphoesterase_YjcG"/>
    <property type="match status" value="1"/>
</dbReference>
<dbReference type="InterPro" id="IPR050580">
    <property type="entry name" value="2H_phosphoesterase_YjcG-like"/>
</dbReference>
<dbReference type="InterPro" id="IPR009097">
    <property type="entry name" value="Cyclic_Pdiesterase"/>
</dbReference>
<dbReference type="InterPro" id="IPR022932">
    <property type="entry name" value="YjcG"/>
</dbReference>
<dbReference type="NCBIfam" id="NF010223">
    <property type="entry name" value="PRK13679.1"/>
    <property type="match status" value="1"/>
</dbReference>
<dbReference type="PANTHER" id="PTHR40037:SF1">
    <property type="entry name" value="PHOSPHOESTERASE SAOUHSC_00951-RELATED"/>
    <property type="match status" value="1"/>
</dbReference>
<dbReference type="PANTHER" id="PTHR40037">
    <property type="entry name" value="PHOSPHOESTERASE YJCG-RELATED"/>
    <property type="match status" value="1"/>
</dbReference>
<dbReference type="Pfam" id="PF13563">
    <property type="entry name" value="2_5_RNA_ligase2"/>
    <property type="match status" value="1"/>
</dbReference>
<dbReference type="SUPFAM" id="SSF55144">
    <property type="entry name" value="LigT-like"/>
    <property type="match status" value="1"/>
</dbReference>
<proteinExistence type="inferred from homology"/>
<name>Y4061_BACC2</name>
<gene>
    <name type="ordered locus">BCG9842_B4061</name>
</gene>
<keyword id="KW-0378">Hydrolase</keyword>
<reference key="1">
    <citation type="submission" date="2008-10" db="EMBL/GenBank/DDBJ databases">
        <title>Genome sequence of Bacillus cereus G9842.</title>
        <authorList>
            <person name="Dodson R.J."/>
            <person name="Durkin A.S."/>
            <person name="Rosovitz M.J."/>
            <person name="Rasko D.A."/>
            <person name="Hoffmaster A."/>
            <person name="Ravel J."/>
            <person name="Sutton G."/>
        </authorList>
    </citation>
    <scope>NUCLEOTIDE SEQUENCE [LARGE SCALE GENOMIC DNA]</scope>
    <source>
        <strain>G9842</strain>
    </source>
</reference>
<feature type="chain" id="PRO_1000145933" description="Putative phosphoesterase BCG9842_B4061">
    <location>
        <begin position="1"/>
        <end position="172"/>
    </location>
</feature>
<feature type="short sequence motif" description="HXTX 1" evidence="1">
    <location>
        <begin position="34"/>
        <end position="37"/>
    </location>
</feature>
<feature type="short sequence motif" description="HXTX 2" evidence="1">
    <location>
        <begin position="115"/>
        <end position="118"/>
    </location>
</feature>
<feature type="active site" description="Proton donor" evidence="1">
    <location>
        <position position="34"/>
    </location>
</feature>
<feature type="active site" description="Proton acceptor" evidence="1">
    <location>
        <position position="115"/>
    </location>
</feature>
<protein>
    <recommendedName>
        <fullName evidence="1">Putative phosphoesterase BCG9842_B4061</fullName>
        <ecNumber evidence="1">3.1.-.-</ecNumber>
    </recommendedName>
</protein>
<accession>B7IM63</accession>
<sequence length="172" mass="19765">MKLGIVIFPSKMIQDKANGLRKRYDPHYALVPPHITLKTPFETQDEQLESIVNELHTIAGKTNPFTLHVGKVGSFAPVNNVLYFKVEKTPELTFLNEEMHGGLFTQEREYAFVPHLTIGQGLSDAEHADVLGRLRMKDFYYEQPIDRFHLLYQLENGTWTVHETFHLGKGNN</sequence>
<comment type="similarity">
    <text evidence="1">Belongs to the 2H phosphoesterase superfamily. YjcG family.</text>
</comment>